<proteinExistence type="evidence at protein level"/>
<evidence type="ECO:0000256" key="1">
    <source>
        <dbReference type="SAM" id="MobiDB-lite"/>
    </source>
</evidence>
<evidence type="ECO:0000269" key="2">
    <source>
    </source>
</evidence>
<evidence type="ECO:0000269" key="3">
    <source>
    </source>
</evidence>
<evidence type="ECO:0000269" key="4">
    <source>
    </source>
</evidence>
<evidence type="ECO:0000305" key="5"/>
<dbReference type="EMBL" id="AF170880">
    <property type="protein sequence ID" value="AAF67500.1"/>
    <property type="molecule type" value="Genomic_DNA"/>
</dbReference>
<dbReference type="RefSeq" id="WP_069626138.1">
    <property type="nucleotide sequence ID" value="NZ_JBHJRU010000005.1"/>
</dbReference>
<dbReference type="SMR" id="Q9L9G1"/>
<dbReference type="GO" id="GO:0003677">
    <property type="term" value="F:DNA binding"/>
    <property type="evidence" value="ECO:0007669"/>
    <property type="project" value="UniProtKB-KW"/>
</dbReference>
<dbReference type="GO" id="GO:0017000">
    <property type="term" value="P:antibiotic biosynthetic process"/>
    <property type="evidence" value="ECO:0007669"/>
    <property type="project" value="UniProtKB-KW"/>
</dbReference>
<dbReference type="InterPro" id="IPR003115">
    <property type="entry name" value="ParB/Sulfiredoxin_dom"/>
</dbReference>
<dbReference type="InterPro" id="IPR036086">
    <property type="entry name" value="ParB/Sulfiredoxin_sf"/>
</dbReference>
<dbReference type="SMART" id="SM00470">
    <property type="entry name" value="ParB"/>
    <property type="match status" value="1"/>
</dbReference>
<dbReference type="SUPFAM" id="SSF110849">
    <property type="entry name" value="ParB/Sulfiredoxin"/>
    <property type="match status" value="1"/>
</dbReference>
<keyword id="KW-0010">Activator</keyword>
<keyword id="KW-0045">Antibiotic biosynthesis</keyword>
<keyword id="KW-0238">DNA-binding</keyword>
<keyword id="KW-0804">Transcription</keyword>
<keyword id="KW-0805">Transcription regulation</keyword>
<organism>
    <name type="scientific">Streptomyces niveus</name>
    <name type="common">Streptomyces spheroides</name>
    <dbReference type="NCBI Taxonomy" id="193462"/>
    <lineage>
        <taxon>Bacteria</taxon>
        <taxon>Bacillati</taxon>
        <taxon>Actinomycetota</taxon>
        <taxon>Actinomycetes</taxon>
        <taxon>Kitasatosporales</taxon>
        <taxon>Streptomycetaceae</taxon>
        <taxon>Streptomyces</taxon>
    </lineage>
</organism>
<feature type="chain" id="PRO_0000423994" description="Transcriptional regulator NovG">
    <location>
        <begin position="1"/>
        <end position="318"/>
    </location>
</feature>
<feature type="region of interest" description="Disordered" evidence="1">
    <location>
        <begin position="146"/>
        <end position="176"/>
    </location>
</feature>
<feature type="compositionally biased region" description="Polar residues" evidence="1">
    <location>
        <begin position="146"/>
        <end position="156"/>
    </location>
</feature>
<feature type="compositionally biased region" description="Basic and acidic residues" evidence="1">
    <location>
        <begin position="162"/>
        <end position="176"/>
    </location>
</feature>
<protein>
    <recommendedName>
        <fullName>Transcriptional regulator NovG</fullName>
    </recommendedName>
    <alternativeName>
        <fullName>Novobiocin biosynthesis protein G</fullName>
    </alternativeName>
</protein>
<name>NOVG_STRNV</name>
<accession>Q9L9G1</accession>
<sequence>MTNSGDEEITPASLKATRKGERVSIGSLLPPSELVRSGESTEHIRVLAETDEDLPPIVVHRGTRRVVDGMHRLWAARFRGDESIEVVFVDGSPADVFVLAVELNRAHGLPLTLDERKSAAAQIMDSHPHWSDRKIARTTGLAASTVASLRSSSTAGTVGRRTGQDGRSRPNDGTDGRQRAAALLARNPNASLREVTRAAGISVGTASDVRARLRRGEPALTARQQAVMKLRPAAAQRSGPDYGRVLENLRKDPSLRFTDLGRRLLRLLDGSVPGSVEQIAQIADGVPEHCRTVVVDMARECAAAWQHLADQLADRDTA</sequence>
<gene>
    <name type="primary">novG</name>
</gene>
<comment type="function">
    <text evidence="2 3 4">Transcription regulator that specifically activates expression of genes involved in the novobiocin biosynthesis pathway. Binds 5'-GTTCRACTG(N)(11)CRGTYGAAC-3' DNA sequence.</text>
</comment>
<comment type="disruption phenotype">
    <text evidence="2">Cells produce only 2% of the novobiocin.</text>
</comment>
<comment type="similarity">
    <text evidence="5">Belongs to the ParB family.</text>
</comment>
<reference key="1">
    <citation type="journal article" date="2000" name="Antimicrob. Agents Chemother.">
        <title>Identification of the novobiocin biosynthetic gene cluster of Streptomyces spheroides NCIB 11891.</title>
        <authorList>
            <person name="Steffensky M."/>
            <person name="Muhlenweg A."/>
            <person name="Wang Z.X."/>
            <person name="Li S.M."/>
            <person name="Heide L."/>
        </authorList>
    </citation>
    <scope>NUCLEOTIDE SEQUENCE [GENOMIC DNA]</scope>
    <source>
        <strain>ATCC 23965 / DSM 40292 / JCM 4252 / NBRC 12917 / NCIMB 11891 / NRRL 2449</strain>
    </source>
</reference>
<reference key="2">
    <citation type="journal article" date="2005" name="Microbiology">
        <title>NovG, a DNA-binding protein acting as a positive regulator of novobiocin biosynthesis.</title>
        <authorList>
            <person name="Eustaquio A.S."/>
            <person name="Li S.M."/>
            <person name="Heide L."/>
        </authorList>
    </citation>
    <scope>FUNCTION</scope>
    <scope>DNA-BINDING</scope>
    <scope>DISRUPTION PHENOTYPE</scope>
</reference>
<reference key="3">
    <citation type="journal article" date="2008" name="Arch. Microbiol.">
        <title>novE and novG act as positive regulators of novobiocin biosynthesis.</title>
        <authorList>
            <person name="Dangel V."/>
            <person name="Eustaquio A.S."/>
            <person name="Gust B."/>
            <person name="Heide L."/>
        </authorList>
    </citation>
    <scope>FUNCTION</scope>
    <source>
        <strain>ATCC 23965 / DSM 40292 / JCM 4252 / NBRC 12917 / NCIMB 11891 / NRRL 2449</strain>
    </source>
</reference>
<reference key="4">
    <citation type="journal article" date="2009" name="Microbiology">
        <title>Transcriptional regulation of the novobiocin biosynthetic gene cluster.</title>
        <authorList>
            <person name="Dangel V."/>
            <person name="Harle J."/>
            <person name="Goerke C."/>
            <person name="Wolz C."/>
            <person name="Gust B."/>
            <person name="Pernodet J.L."/>
            <person name="Heide L."/>
        </authorList>
    </citation>
    <scope>FUNCTION</scope>
    <source>
        <strain>ATCC 23965 / DSM 40292 / JCM 4252 / NBRC 12917 / NCIMB 11891 / NRRL 2449</strain>
    </source>
</reference>